<organism>
    <name type="scientific">Acetivibrio thermocellus (strain ATCC 27405 / DSM 1237 / JCM 9322 / NBRC 103400 / NCIMB 10682 / NRRL B-4536 / VPI 7372)</name>
    <name type="common">Clostridium thermocellum</name>
    <dbReference type="NCBI Taxonomy" id="203119"/>
    <lineage>
        <taxon>Bacteria</taxon>
        <taxon>Bacillati</taxon>
        <taxon>Bacillota</taxon>
        <taxon>Clostridia</taxon>
        <taxon>Eubacteriales</taxon>
        <taxon>Oscillospiraceae</taxon>
        <taxon>Acetivibrio</taxon>
    </lineage>
</organism>
<comment type="subunit">
    <text evidence="1">Part of the 50S ribosomal subunit. Contacts protein L32.</text>
</comment>
<comment type="similarity">
    <text evidence="1">Belongs to the bacterial ribosomal protein bL17 family.</text>
</comment>
<accession>A3DJK2</accession>
<proteinExistence type="inferred from homology"/>
<protein>
    <recommendedName>
        <fullName evidence="1">Large ribosomal subunit protein bL17</fullName>
    </recommendedName>
    <alternativeName>
        <fullName evidence="2">50S ribosomal protein L17</fullName>
    </alternativeName>
</protein>
<gene>
    <name evidence="1" type="primary">rplQ</name>
    <name type="ordered locus">Cthe_2933</name>
</gene>
<feature type="chain" id="PRO_1000055806" description="Large ribosomal subunit protein bL17">
    <location>
        <begin position="1"/>
        <end position="174"/>
    </location>
</feature>
<keyword id="KW-1185">Reference proteome</keyword>
<keyword id="KW-0687">Ribonucleoprotein</keyword>
<keyword id="KW-0689">Ribosomal protein</keyword>
<evidence type="ECO:0000255" key="1">
    <source>
        <dbReference type="HAMAP-Rule" id="MF_01368"/>
    </source>
</evidence>
<evidence type="ECO:0000305" key="2"/>
<dbReference type="EMBL" id="CP000568">
    <property type="protein sequence ID" value="ABN54131.1"/>
    <property type="molecule type" value="Genomic_DNA"/>
</dbReference>
<dbReference type="RefSeq" id="WP_020457962.1">
    <property type="nucleotide sequence ID" value="NC_009012.1"/>
</dbReference>
<dbReference type="SMR" id="A3DJK2"/>
<dbReference type="STRING" id="203119.Cthe_2933"/>
<dbReference type="GeneID" id="35804833"/>
<dbReference type="KEGG" id="cth:Cthe_2933"/>
<dbReference type="eggNOG" id="COG0203">
    <property type="taxonomic scope" value="Bacteria"/>
</dbReference>
<dbReference type="HOGENOM" id="CLU_074407_2_2_9"/>
<dbReference type="OrthoDB" id="9809073at2"/>
<dbReference type="Proteomes" id="UP000002145">
    <property type="component" value="Chromosome"/>
</dbReference>
<dbReference type="GO" id="GO:0022625">
    <property type="term" value="C:cytosolic large ribosomal subunit"/>
    <property type="evidence" value="ECO:0007669"/>
    <property type="project" value="TreeGrafter"/>
</dbReference>
<dbReference type="GO" id="GO:0003735">
    <property type="term" value="F:structural constituent of ribosome"/>
    <property type="evidence" value="ECO:0007669"/>
    <property type="project" value="InterPro"/>
</dbReference>
<dbReference type="GO" id="GO:0006412">
    <property type="term" value="P:translation"/>
    <property type="evidence" value="ECO:0007669"/>
    <property type="project" value="UniProtKB-UniRule"/>
</dbReference>
<dbReference type="Gene3D" id="3.90.1030.10">
    <property type="entry name" value="Ribosomal protein L17"/>
    <property type="match status" value="1"/>
</dbReference>
<dbReference type="HAMAP" id="MF_01368">
    <property type="entry name" value="Ribosomal_bL17"/>
    <property type="match status" value="1"/>
</dbReference>
<dbReference type="InterPro" id="IPR000456">
    <property type="entry name" value="Ribosomal_bL17"/>
</dbReference>
<dbReference type="InterPro" id="IPR036373">
    <property type="entry name" value="Ribosomal_bL17_sf"/>
</dbReference>
<dbReference type="PANTHER" id="PTHR14413:SF16">
    <property type="entry name" value="LARGE RIBOSOMAL SUBUNIT PROTEIN BL17M"/>
    <property type="match status" value="1"/>
</dbReference>
<dbReference type="PANTHER" id="PTHR14413">
    <property type="entry name" value="RIBOSOMAL PROTEIN L17"/>
    <property type="match status" value="1"/>
</dbReference>
<dbReference type="Pfam" id="PF01196">
    <property type="entry name" value="Ribosomal_L17"/>
    <property type="match status" value="1"/>
</dbReference>
<dbReference type="SUPFAM" id="SSF64263">
    <property type="entry name" value="Prokaryotic ribosomal protein L17"/>
    <property type="match status" value="1"/>
</dbReference>
<sequence length="174" mass="19708">MPAQRKLGRPTDQRKAVLKSLVTALFQNGKIETTEAKAKEVKNIAEKLIAIAVKECDNFTSKQVKVSAAKLDSKGNKITNTKKSKNGNEYLVVEREIKTDMQRVDNPSRLHARRKVMSWLYRVKDSEGNTINLANKLFDEIAPKYRDVQGGYTRMYRIGPRKGDAAEMVILQLV</sequence>
<name>RL17_ACET2</name>
<reference key="1">
    <citation type="submission" date="2007-02" db="EMBL/GenBank/DDBJ databases">
        <title>Complete sequence of Clostridium thermocellum ATCC 27405.</title>
        <authorList>
            <consortium name="US DOE Joint Genome Institute"/>
            <person name="Copeland A."/>
            <person name="Lucas S."/>
            <person name="Lapidus A."/>
            <person name="Barry K."/>
            <person name="Detter J.C."/>
            <person name="Glavina del Rio T."/>
            <person name="Hammon N."/>
            <person name="Israni S."/>
            <person name="Dalin E."/>
            <person name="Tice H."/>
            <person name="Pitluck S."/>
            <person name="Chertkov O."/>
            <person name="Brettin T."/>
            <person name="Bruce D."/>
            <person name="Han C."/>
            <person name="Tapia R."/>
            <person name="Gilna P."/>
            <person name="Schmutz J."/>
            <person name="Larimer F."/>
            <person name="Land M."/>
            <person name="Hauser L."/>
            <person name="Kyrpides N."/>
            <person name="Mikhailova N."/>
            <person name="Wu J.H.D."/>
            <person name="Newcomb M."/>
            <person name="Richardson P."/>
        </authorList>
    </citation>
    <scope>NUCLEOTIDE SEQUENCE [LARGE SCALE GENOMIC DNA]</scope>
    <source>
        <strain>ATCC 27405 / DSM 1237 / JCM 9322 / NBRC 103400 / NCIMB 10682 / NRRL B-4536 / VPI 7372</strain>
    </source>
</reference>